<accession>Q7A1V6</accession>
<reference key="1">
    <citation type="journal article" date="2002" name="Lancet">
        <title>Genome and virulence determinants of high virulence community-acquired MRSA.</title>
        <authorList>
            <person name="Baba T."/>
            <person name="Takeuchi F."/>
            <person name="Kuroda M."/>
            <person name="Yuzawa H."/>
            <person name="Aoki K."/>
            <person name="Oguchi A."/>
            <person name="Nagai Y."/>
            <person name="Iwama N."/>
            <person name="Asano K."/>
            <person name="Naimi T."/>
            <person name="Kuroda H."/>
            <person name="Cui L."/>
            <person name="Yamamoto K."/>
            <person name="Hiramatsu K."/>
        </authorList>
    </citation>
    <scope>NUCLEOTIDE SEQUENCE [LARGE SCALE GENOMIC DNA]</scope>
    <source>
        <strain>MW2</strain>
    </source>
</reference>
<protein>
    <recommendedName>
        <fullName evidence="1">D-ribose pyranase</fullName>
        <ecNumber evidence="1">5.4.99.62</ecNumber>
    </recommendedName>
</protein>
<sequence length="134" mass="15165">MKKSAVLNEHISKAIATIGHFDLLTINDAGMPIPNDHRRIDLAVTKNLPRFIDVLATVLEEMEIQKIYLAEEIKEHNPTQLQQIKQLISSEIEIIFIPHEEMKSNLAHPLNKGNIRTGETTPYSNIALESNVTF</sequence>
<evidence type="ECO:0000255" key="1">
    <source>
        <dbReference type="HAMAP-Rule" id="MF_01661"/>
    </source>
</evidence>
<keyword id="KW-0119">Carbohydrate metabolism</keyword>
<keyword id="KW-0963">Cytoplasm</keyword>
<keyword id="KW-0413">Isomerase</keyword>
<dbReference type="EC" id="5.4.99.62" evidence="1"/>
<dbReference type="EMBL" id="BA000033">
    <property type="protein sequence ID" value="BAB94110.1"/>
    <property type="molecule type" value="Genomic_DNA"/>
</dbReference>
<dbReference type="RefSeq" id="WP_000747873.1">
    <property type="nucleotide sequence ID" value="NC_003923.1"/>
</dbReference>
<dbReference type="SMR" id="Q7A1V6"/>
<dbReference type="KEGG" id="sam:MW0245"/>
<dbReference type="HOGENOM" id="CLU_135498_0_0_9"/>
<dbReference type="UniPathway" id="UPA00916">
    <property type="reaction ID" value="UER00888"/>
</dbReference>
<dbReference type="GO" id="GO:0005829">
    <property type="term" value="C:cytosol"/>
    <property type="evidence" value="ECO:0007669"/>
    <property type="project" value="TreeGrafter"/>
</dbReference>
<dbReference type="GO" id="GO:0062193">
    <property type="term" value="F:D-ribose pyranase activity"/>
    <property type="evidence" value="ECO:0007669"/>
    <property type="project" value="UniProtKB-EC"/>
</dbReference>
<dbReference type="GO" id="GO:0016872">
    <property type="term" value="F:intramolecular lyase activity"/>
    <property type="evidence" value="ECO:0007669"/>
    <property type="project" value="UniProtKB-UniRule"/>
</dbReference>
<dbReference type="GO" id="GO:0048029">
    <property type="term" value="F:monosaccharide binding"/>
    <property type="evidence" value="ECO:0007669"/>
    <property type="project" value="InterPro"/>
</dbReference>
<dbReference type="GO" id="GO:0019303">
    <property type="term" value="P:D-ribose catabolic process"/>
    <property type="evidence" value="ECO:0007669"/>
    <property type="project" value="UniProtKB-UniRule"/>
</dbReference>
<dbReference type="FunFam" id="3.40.1650.10:FF:000004">
    <property type="entry name" value="D-ribose pyranase"/>
    <property type="match status" value="1"/>
</dbReference>
<dbReference type="Gene3D" id="3.40.1650.10">
    <property type="entry name" value="RbsD-like domain"/>
    <property type="match status" value="1"/>
</dbReference>
<dbReference type="HAMAP" id="MF_01661">
    <property type="entry name" value="D_rib_pyranase"/>
    <property type="match status" value="1"/>
</dbReference>
<dbReference type="InterPro" id="IPR023064">
    <property type="entry name" value="D-ribose_pyranase"/>
</dbReference>
<dbReference type="InterPro" id="IPR023750">
    <property type="entry name" value="RbsD-like_sf"/>
</dbReference>
<dbReference type="InterPro" id="IPR007721">
    <property type="entry name" value="RbsD_FucU"/>
</dbReference>
<dbReference type="NCBIfam" id="NF008761">
    <property type="entry name" value="PRK11797.1"/>
    <property type="match status" value="1"/>
</dbReference>
<dbReference type="PANTHER" id="PTHR37831">
    <property type="entry name" value="D-RIBOSE PYRANASE"/>
    <property type="match status" value="1"/>
</dbReference>
<dbReference type="PANTHER" id="PTHR37831:SF1">
    <property type="entry name" value="D-RIBOSE PYRANASE"/>
    <property type="match status" value="1"/>
</dbReference>
<dbReference type="Pfam" id="PF05025">
    <property type="entry name" value="RbsD_FucU"/>
    <property type="match status" value="1"/>
</dbReference>
<dbReference type="SUPFAM" id="SSF102546">
    <property type="entry name" value="RbsD-like"/>
    <property type="match status" value="1"/>
</dbReference>
<comment type="function">
    <text evidence="1">Catalyzes the interconversion of beta-pyran and beta-furan forms of D-ribose.</text>
</comment>
<comment type="catalytic activity">
    <reaction evidence="1">
        <text>beta-D-ribopyranose = beta-D-ribofuranose</text>
        <dbReference type="Rhea" id="RHEA:25432"/>
        <dbReference type="ChEBI" id="CHEBI:27476"/>
        <dbReference type="ChEBI" id="CHEBI:47002"/>
        <dbReference type="EC" id="5.4.99.62"/>
    </reaction>
</comment>
<comment type="pathway">
    <text evidence="1">Carbohydrate metabolism; D-ribose degradation; D-ribose 5-phosphate from beta-D-ribopyranose: step 1/2.</text>
</comment>
<comment type="subunit">
    <text evidence="1">Homodecamer.</text>
</comment>
<comment type="subcellular location">
    <subcellularLocation>
        <location evidence="1">Cytoplasm</location>
    </subcellularLocation>
</comment>
<comment type="similarity">
    <text evidence="1">Belongs to the RbsD / FucU family. RbsD subfamily.</text>
</comment>
<feature type="chain" id="PRO_0000346269" description="D-ribose pyranase">
    <location>
        <begin position="1"/>
        <end position="134"/>
    </location>
</feature>
<feature type="active site" description="Proton donor" evidence="1">
    <location>
        <position position="20"/>
    </location>
</feature>
<feature type="binding site" evidence="1">
    <location>
        <position position="28"/>
    </location>
    <ligand>
        <name>substrate</name>
    </ligand>
</feature>
<feature type="binding site" evidence="1">
    <location>
        <position position="99"/>
    </location>
    <ligand>
        <name>substrate</name>
    </ligand>
</feature>
<feature type="binding site" evidence="1">
    <location>
        <begin position="123"/>
        <end position="125"/>
    </location>
    <ligand>
        <name>substrate</name>
    </ligand>
</feature>
<organism>
    <name type="scientific">Staphylococcus aureus (strain MW2)</name>
    <dbReference type="NCBI Taxonomy" id="196620"/>
    <lineage>
        <taxon>Bacteria</taxon>
        <taxon>Bacillati</taxon>
        <taxon>Bacillota</taxon>
        <taxon>Bacilli</taxon>
        <taxon>Bacillales</taxon>
        <taxon>Staphylococcaceae</taxon>
        <taxon>Staphylococcus</taxon>
    </lineage>
</organism>
<name>RBSD_STAAW</name>
<gene>
    <name evidence="1" type="primary">rbsD</name>
    <name type="ordered locus">MW0245</name>
</gene>
<proteinExistence type="inferred from homology"/>